<comment type="function">
    <text evidence="2 3">Phytyl-phosphate kinase catalyzing the conversion of phytyl-monophosphate to phytyl-diphosphate (PubMed:26452599). Involved in the activation and reutilization of phytol from chlorophyll degradation in plant metabolism, including tocopherol (vitamin E) biosynthesis (PubMed:26452599). Involved in the biosynthesis of phylloquinone (vitamin K), which is required for the photosystem I (PSI) complex stability (PubMed:28007557).</text>
</comment>
<comment type="catalytic activity">
    <reaction evidence="2">
        <text>phytyl phosphate + a ribonucleoside 5'-triphosphate = phytyl diphosphate + a ribonucleoside 5'-diphosphate</text>
        <dbReference type="Rhea" id="RHEA:38099"/>
        <dbReference type="ChEBI" id="CHEBI:57930"/>
        <dbReference type="ChEBI" id="CHEBI:61557"/>
        <dbReference type="ChEBI" id="CHEBI:75434"/>
        <dbReference type="ChEBI" id="CHEBI:75483"/>
    </reaction>
    <physiologicalReaction direction="left-to-right" evidence="2">
        <dbReference type="Rhea" id="RHEA:38100"/>
    </physiologicalReaction>
</comment>
<comment type="catalytic activity">
    <reaction evidence="2">
        <text>phytyl phosphate + CTP = phytyl diphosphate + CDP</text>
        <dbReference type="Rhea" id="RHEA:49276"/>
        <dbReference type="ChEBI" id="CHEBI:37563"/>
        <dbReference type="ChEBI" id="CHEBI:58069"/>
        <dbReference type="ChEBI" id="CHEBI:75434"/>
        <dbReference type="ChEBI" id="CHEBI:75483"/>
    </reaction>
    <physiologicalReaction direction="left-to-right" evidence="2">
        <dbReference type="Rhea" id="RHEA:49277"/>
    </physiologicalReaction>
</comment>
<comment type="pathway">
    <text evidence="2">Cofactor biosynthesis; tocopherol biosynthesis.</text>
</comment>
<comment type="subcellular location">
    <subcellularLocation>
        <location evidence="2">Plastid</location>
        <location evidence="2">Chloroplast membrane</location>
        <topology evidence="1">Multi-pass membrane protein</topology>
    </subcellularLocation>
</comment>
<comment type="alternative products">
    <event type="alternative splicing"/>
    <isoform>
        <id>Q9SYM0-1</id>
        <name>1</name>
        <sequence type="displayed"/>
    </isoform>
    <text>A number of isoforms are produced. According to EST sequences.</text>
</comment>
<comment type="disruption phenotype">
    <text evidence="2">Lethal when homozygous. Tocopherol-deficient plants are unable to grow photoautotrophically and infertile. Vte5 and vte6 double mutants can grow photoautotrophically and display a stay-green phenotype with strongly delayed senescence and an extended lifetime.</text>
</comment>
<comment type="miscellaneous">
    <text evidence="2">Overexpression of VTE6 results in increased phytyl-PP and tocopherol levels in seeds.</text>
</comment>
<comment type="similarity">
    <text evidence="5">Belongs to the TMEM19 family.</text>
</comment>
<keyword id="KW-0025">Alternative splicing</keyword>
<keyword id="KW-0150">Chloroplast</keyword>
<keyword id="KW-0472">Membrane</keyword>
<keyword id="KW-0934">Plastid</keyword>
<keyword id="KW-1185">Reference proteome</keyword>
<keyword id="KW-0808">Transferase</keyword>
<keyword id="KW-0809">Transit peptide</keyword>
<keyword id="KW-0812">Transmembrane</keyword>
<keyword id="KW-1133">Transmembrane helix</keyword>
<reference key="1">
    <citation type="journal article" date="2000" name="Nature">
        <title>Sequence and analysis of chromosome 1 of the plant Arabidopsis thaliana.</title>
        <authorList>
            <person name="Theologis A."/>
            <person name="Ecker J.R."/>
            <person name="Palm C.J."/>
            <person name="Federspiel N.A."/>
            <person name="Kaul S."/>
            <person name="White O."/>
            <person name="Alonso J."/>
            <person name="Altafi H."/>
            <person name="Araujo R."/>
            <person name="Bowman C.L."/>
            <person name="Brooks S.Y."/>
            <person name="Buehler E."/>
            <person name="Chan A."/>
            <person name="Chao Q."/>
            <person name="Chen H."/>
            <person name="Cheuk R.F."/>
            <person name="Chin C.W."/>
            <person name="Chung M.K."/>
            <person name="Conn L."/>
            <person name="Conway A.B."/>
            <person name="Conway A.R."/>
            <person name="Creasy T.H."/>
            <person name="Dewar K."/>
            <person name="Dunn P."/>
            <person name="Etgu P."/>
            <person name="Feldblyum T.V."/>
            <person name="Feng J.-D."/>
            <person name="Fong B."/>
            <person name="Fujii C.Y."/>
            <person name="Gill J.E."/>
            <person name="Goldsmith A.D."/>
            <person name="Haas B."/>
            <person name="Hansen N.F."/>
            <person name="Hughes B."/>
            <person name="Huizar L."/>
            <person name="Hunter J.L."/>
            <person name="Jenkins J."/>
            <person name="Johnson-Hopson C."/>
            <person name="Khan S."/>
            <person name="Khaykin E."/>
            <person name="Kim C.J."/>
            <person name="Koo H.L."/>
            <person name="Kremenetskaia I."/>
            <person name="Kurtz D.B."/>
            <person name="Kwan A."/>
            <person name="Lam B."/>
            <person name="Langin-Hooper S."/>
            <person name="Lee A."/>
            <person name="Lee J.M."/>
            <person name="Lenz C.A."/>
            <person name="Li J.H."/>
            <person name="Li Y.-P."/>
            <person name="Lin X."/>
            <person name="Liu S.X."/>
            <person name="Liu Z.A."/>
            <person name="Luros J.S."/>
            <person name="Maiti R."/>
            <person name="Marziali A."/>
            <person name="Militscher J."/>
            <person name="Miranda M."/>
            <person name="Nguyen M."/>
            <person name="Nierman W.C."/>
            <person name="Osborne B.I."/>
            <person name="Pai G."/>
            <person name="Peterson J."/>
            <person name="Pham P.K."/>
            <person name="Rizzo M."/>
            <person name="Rooney T."/>
            <person name="Rowley D."/>
            <person name="Sakano H."/>
            <person name="Salzberg S.L."/>
            <person name="Schwartz J.R."/>
            <person name="Shinn P."/>
            <person name="Southwick A.M."/>
            <person name="Sun H."/>
            <person name="Tallon L.J."/>
            <person name="Tambunga G."/>
            <person name="Toriumi M.J."/>
            <person name="Town C.D."/>
            <person name="Utterback T."/>
            <person name="Van Aken S."/>
            <person name="Vaysberg M."/>
            <person name="Vysotskaia V.S."/>
            <person name="Walker M."/>
            <person name="Wu D."/>
            <person name="Yu G."/>
            <person name="Fraser C.M."/>
            <person name="Venter J.C."/>
            <person name="Davis R.W."/>
        </authorList>
    </citation>
    <scope>NUCLEOTIDE SEQUENCE [LARGE SCALE GENOMIC DNA]</scope>
    <source>
        <strain>cv. Columbia</strain>
    </source>
</reference>
<reference key="2">
    <citation type="journal article" date="2017" name="Plant J.">
        <title>Araport11: a complete reannotation of the Arabidopsis thaliana reference genome.</title>
        <authorList>
            <person name="Cheng C.Y."/>
            <person name="Krishnakumar V."/>
            <person name="Chan A.P."/>
            <person name="Thibaud-Nissen F."/>
            <person name="Schobel S."/>
            <person name="Town C.D."/>
        </authorList>
    </citation>
    <scope>GENOME REANNOTATION</scope>
    <source>
        <strain>cv. Columbia</strain>
    </source>
</reference>
<reference key="3">
    <citation type="journal article" date="2003" name="Science">
        <title>Empirical analysis of transcriptional activity in the Arabidopsis genome.</title>
        <authorList>
            <person name="Yamada K."/>
            <person name="Lim J."/>
            <person name="Dale J.M."/>
            <person name="Chen H."/>
            <person name="Shinn P."/>
            <person name="Palm C.J."/>
            <person name="Southwick A.M."/>
            <person name="Wu H.C."/>
            <person name="Kim C.J."/>
            <person name="Nguyen M."/>
            <person name="Pham P.K."/>
            <person name="Cheuk R.F."/>
            <person name="Karlin-Newmann G."/>
            <person name="Liu S.X."/>
            <person name="Lam B."/>
            <person name="Sakano H."/>
            <person name="Wu T."/>
            <person name="Yu G."/>
            <person name="Miranda M."/>
            <person name="Quach H.L."/>
            <person name="Tripp M."/>
            <person name="Chang C.H."/>
            <person name="Lee J.M."/>
            <person name="Toriumi M.J."/>
            <person name="Chan M.M."/>
            <person name="Tang C.C."/>
            <person name="Onodera C.S."/>
            <person name="Deng J.M."/>
            <person name="Akiyama K."/>
            <person name="Ansari Y."/>
            <person name="Arakawa T."/>
            <person name="Banh J."/>
            <person name="Banno F."/>
            <person name="Bowser L."/>
            <person name="Brooks S.Y."/>
            <person name="Carninci P."/>
            <person name="Chao Q."/>
            <person name="Choy N."/>
            <person name="Enju A."/>
            <person name="Goldsmith A.D."/>
            <person name="Gurjal M."/>
            <person name="Hansen N.F."/>
            <person name="Hayashizaki Y."/>
            <person name="Johnson-Hopson C."/>
            <person name="Hsuan V.W."/>
            <person name="Iida K."/>
            <person name="Karnes M."/>
            <person name="Khan S."/>
            <person name="Koesema E."/>
            <person name="Ishida J."/>
            <person name="Jiang P.X."/>
            <person name="Jones T."/>
            <person name="Kawai J."/>
            <person name="Kamiya A."/>
            <person name="Meyers C."/>
            <person name="Nakajima M."/>
            <person name="Narusaka M."/>
            <person name="Seki M."/>
            <person name="Sakurai T."/>
            <person name="Satou M."/>
            <person name="Tamse R."/>
            <person name="Vaysberg M."/>
            <person name="Wallender E.K."/>
            <person name="Wong C."/>
            <person name="Yamamura Y."/>
            <person name="Yuan S."/>
            <person name="Shinozaki K."/>
            <person name="Davis R.W."/>
            <person name="Theologis A."/>
            <person name="Ecker J.R."/>
        </authorList>
    </citation>
    <scope>NUCLEOTIDE SEQUENCE [LARGE SCALE MRNA]</scope>
    <source>
        <strain>cv. Columbia</strain>
    </source>
</reference>
<reference key="4">
    <citation type="submission" date="2002-03" db="EMBL/GenBank/DDBJ databases">
        <title>Full-length cDNA from Arabidopsis thaliana.</title>
        <authorList>
            <person name="Brover V.V."/>
            <person name="Troukhan M.E."/>
            <person name="Alexandrov N.A."/>
            <person name="Lu Y.-P."/>
            <person name="Flavell R.B."/>
            <person name="Feldmann K.A."/>
        </authorList>
    </citation>
    <scope>NUCLEOTIDE SEQUENCE [LARGE SCALE MRNA]</scope>
</reference>
<reference key="5">
    <citation type="journal article" date="2015" name="Plant Cell">
        <title>Remobilization of phytol from chlorophyll degradation is essential for tocopherol synthesis and growth of Arabidopsis.</title>
        <authorList>
            <person name="Vom Dorp K."/>
            <person name="Hoelzl G."/>
            <person name="Plohmann C."/>
            <person name="Eisenhut M."/>
            <person name="Abraham M."/>
            <person name="Weber A.P."/>
            <person name="Hanson A.D."/>
            <person name="Doermann P."/>
        </authorList>
    </citation>
    <scope>FUNCTION</scope>
    <scope>CATALYTIC ACTIVITY</scope>
    <scope>SUBCELLULAR LOCATION</scope>
    <scope>DISRUPTION PHENOTYPE</scope>
    <scope>GENE FAMILY</scope>
</reference>
<reference key="6">
    <citation type="journal article" date="2017" name="Mol. Plant">
        <title>The phytol phosphorylation pathway is essential for the biosynthesis of phylloquinone, which is required for photosystem I stability in Arabidopsis.</title>
        <authorList>
            <person name="Wang L."/>
            <person name="Li Q."/>
            <person name="Zhang A."/>
            <person name="Zhou W."/>
            <person name="Jiang R."/>
            <person name="Yang Z."/>
            <person name="Yang H."/>
            <person name="Qin X."/>
            <person name="Ding S."/>
            <person name="Lu Q."/>
            <person name="Wen X."/>
            <person name="Lu C."/>
        </authorList>
    </citation>
    <scope>FUNCTION</scope>
</reference>
<gene>
    <name evidence="4" type="primary">VTE6</name>
    <name evidence="6" type="ordered locus">At1g78620</name>
    <name evidence="7" type="ORF">T30F21.5</name>
</gene>
<organism>
    <name type="scientific">Arabidopsis thaliana</name>
    <name type="common">Mouse-ear cress</name>
    <dbReference type="NCBI Taxonomy" id="3702"/>
    <lineage>
        <taxon>Eukaryota</taxon>
        <taxon>Viridiplantae</taxon>
        <taxon>Streptophyta</taxon>
        <taxon>Embryophyta</taxon>
        <taxon>Tracheophyta</taxon>
        <taxon>Spermatophyta</taxon>
        <taxon>Magnoliopsida</taxon>
        <taxon>eudicotyledons</taxon>
        <taxon>Gunneridae</taxon>
        <taxon>Pentapetalae</taxon>
        <taxon>rosids</taxon>
        <taxon>malvids</taxon>
        <taxon>Brassicales</taxon>
        <taxon>Brassicaceae</taxon>
        <taxon>Camelineae</taxon>
        <taxon>Arabidopsis</taxon>
    </lineage>
</organism>
<protein>
    <recommendedName>
        <fullName evidence="4">Protein VTE6, chloroplastic</fullName>
    </recommendedName>
    <alternativeName>
        <fullName evidence="4">Phytyl-P kinase</fullName>
        <ecNumber evidence="5">2.7.4.-</ecNumber>
    </alternativeName>
    <alternativeName>
        <fullName evidence="4">Vitamin E deficient 6</fullName>
    </alternativeName>
</protein>
<feature type="transit peptide" description="Chloroplast" evidence="1">
    <location>
        <begin position="1"/>
        <end position="65"/>
    </location>
</feature>
<feature type="chain" id="PRO_0000435963" description="Protein VTE6, chloroplastic" evidence="1">
    <location>
        <begin position="66"/>
        <end position="333"/>
    </location>
</feature>
<feature type="transmembrane region" description="Helical" evidence="1">
    <location>
        <begin position="94"/>
        <end position="114"/>
    </location>
</feature>
<feature type="transmembrane region" description="Helical" evidence="1">
    <location>
        <begin position="126"/>
        <end position="146"/>
    </location>
</feature>
<feature type="transmembrane region" description="Helical" evidence="1">
    <location>
        <begin position="171"/>
        <end position="191"/>
    </location>
</feature>
<feature type="transmembrane region" description="Helical" evidence="1">
    <location>
        <begin position="248"/>
        <end position="268"/>
    </location>
</feature>
<feature type="transmembrane region" description="Helical" evidence="1">
    <location>
        <begin position="274"/>
        <end position="294"/>
    </location>
</feature>
<feature type="transmembrane region" description="Helical" evidence="1">
    <location>
        <begin position="307"/>
        <end position="327"/>
    </location>
</feature>
<feature type="sequence conflict" description="In Ref. 4; AAM64662." evidence="5" ref="4">
    <original>A</original>
    <variation>P</variation>
    <location>
        <position position="34"/>
    </location>
</feature>
<evidence type="ECO:0000255" key="1"/>
<evidence type="ECO:0000269" key="2">
    <source>
    </source>
</evidence>
<evidence type="ECO:0000269" key="3">
    <source>
    </source>
</evidence>
<evidence type="ECO:0000303" key="4">
    <source>
    </source>
</evidence>
<evidence type="ECO:0000305" key="5"/>
<evidence type="ECO:0000312" key="6">
    <source>
        <dbReference type="Araport" id="AT1G78620"/>
    </source>
</evidence>
<evidence type="ECO:0000312" key="7">
    <source>
        <dbReference type="EMBL" id="AAD30574.1"/>
    </source>
</evidence>
<dbReference type="EC" id="2.7.4.-" evidence="5"/>
<dbReference type="EMBL" id="AC007260">
    <property type="protein sequence ID" value="AAD30574.1"/>
    <property type="molecule type" value="Genomic_DNA"/>
</dbReference>
<dbReference type="EMBL" id="CP002684">
    <property type="protein sequence ID" value="AEE36128.1"/>
    <property type="molecule type" value="Genomic_DNA"/>
</dbReference>
<dbReference type="EMBL" id="AY035002">
    <property type="protein sequence ID" value="AAK59507.1"/>
    <property type="molecule type" value="mRNA"/>
</dbReference>
<dbReference type="EMBL" id="AY063010">
    <property type="protein sequence ID" value="AAL34184.1"/>
    <property type="molecule type" value="mRNA"/>
</dbReference>
<dbReference type="EMBL" id="AY087104">
    <property type="protein sequence ID" value="AAM64662.1"/>
    <property type="molecule type" value="mRNA"/>
</dbReference>
<dbReference type="PIR" id="H96814">
    <property type="entry name" value="H96814"/>
</dbReference>
<dbReference type="RefSeq" id="NP_565184.1">
    <molecule id="Q9SYM0-1"/>
    <property type="nucleotide sequence ID" value="NM_106509.4"/>
</dbReference>
<dbReference type="FunCoup" id="Q9SYM0">
    <property type="interactions" value="264"/>
</dbReference>
<dbReference type="STRING" id="3702.Q9SYM0"/>
<dbReference type="SwissLipids" id="SLP:000001501"/>
<dbReference type="PaxDb" id="3702-AT1G78620.2"/>
<dbReference type="EnsemblPlants" id="AT1G78620.1">
    <molecule id="Q9SYM0-1"/>
    <property type="protein sequence ID" value="AT1G78620.1"/>
    <property type="gene ID" value="AT1G78620"/>
</dbReference>
<dbReference type="GeneID" id="844198"/>
<dbReference type="Gramene" id="AT1G78620.1">
    <molecule id="Q9SYM0-1"/>
    <property type="protein sequence ID" value="AT1G78620.1"/>
    <property type="gene ID" value="AT1G78620"/>
</dbReference>
<dbReference type="KEGG" id="ath:AT1G78620"/>
<dbReference type="Araport" id="AT1G78620"/>
<dbReference type="TAIR" id="AT1G78620">
    <property type="gene designation" value="VTE6"/>
</dbReference>
<dbReference type="eggNOG" id="ENOG502QU2J">
    <property type="taxonomic scope" value="Eukaryota"/>
</dbReference>
<dbReference type="HOGENOM" id="CLU_036918_0_0_1"/>
<dbReference type="InParanoid" id="Q9SYM0"/>
<dbReference type="OMA" id="ILAVFMQ"/>
<dbReference type="PhylomeDB" id="Q9SYM0"/>
<dbReference type="UniPathway" id="UPA00160"/>
<dbReference type="PRO" id="PR:Q9SYM0"/>
<dbReference type="Proteomes" id="UP000006548">
    <property type="component" value="Chromosome 1"/>
</dbReference>
<dbReference type="ExpressionAtlas" id="Q9SYM0">
    <property type="expression patterns" value="baseline and differential"/>
</dbReference>
<dbReference type="GO" id="GO:0031969">
    <property type="term" value="C:chloroplast membrane"/>
    <property type="evidence" value="ECO:0000314"/>
    <property type="project" value="UniProtKB"/>
</dbReference>
<dbReference type="GO" id="GO:0010276">
    <property type="term" value="F:phytol kinase activity"/>
    <property type="evidence" value="ECO:0000314"/>
    <property type="project" value="UniProtKB"/>
</dbReference>
<dbReference type="GO" id="GO:0102763">
    <property type="term" value="F:phytyl-P kinase activity"/>
    <property type="evidence" value="ECO:0007669"/>
    <property type="project" value="RHEA"/>
</dbReference>
<dbReference type="GO" id="GO:0033306">
    <property type="term" value="P:phytol metabolic process"/>
    <property type="evidence" value="ECO:0000314"/>
    <property type="project" value="UniProtKB"/>
</dbReference>
<dbReference type="GO" id="GO:0010189">
    <property type="term" value="P:vitamin E biosynthetic process"/>
    <property type="evidence" value="ECO:0000315"/>
    <property type="project" value="UniProtKB"/>
</dbReference>
<dbReference type="GO" id="GO:0042371">
    <property type="term" value="P:vitamin K biosynthetic process"/>
    <property type="evidence" value="ECO:0000314"/>
    <property type="project" value="UniProtKB"/>
</dbReference>
<dbReference type="InterPro" id="IPR002794">
    <property type="entry name" value="DUF92_TMEM19"/>
</dbReference>
<dbReference type="PANTHER" id="PTHR13353">
    <property type="entry name" value="TRANSMEMBRANE PROTEIN 19"/>
    <property type="match status" value="1"/>
</dbReference>
<dbReference type="PANTHER" id="PTHR13353:SF5">
    <property type="entry name" value="TRANSMEMBRANE PROTEIN 19"/>
    <property type="match status" value="1"/>
</dbReference>
<dbReference type="Pfam" id="PF01940">
    <property type="entry name" value="DUF92"/>
    <property type="match status" value="1"/>
</dbReference>
<accession>Q9SYM0</accession>
<accession>Q8LBN5</accession>
<proteinExistence type="evidence at protein level"/>
<name>VTE6_ARATH</name>
<sequence>MATISSTLLLNSSRSALPLRFPKFSGFSSSSPFARSYRFGRRNLEPLSNGMLSSGSRADGATAAAASMEGVMTEAMKLIQSASPTWKSAVANNLLIFVLGSPLLVTGLSASGIAAAFLLGTLTWRAYGSAGFLLVAAYFVIGTAATKVKMTQKEAQGVAEKRKGRRGPRSVIGSSAAGCVCAFLSIYQVGGAAFSQLFRLGFVSSFCTKVSDTVSSEIGKAYGKTTYLATTFKIVPRGTEGAMSLEGTLAGLLASFFLASVGCFLGQITPPEAAVCVLASQIANLGESIIGASFQDKEGFKWLNNDVVNVINISLGSIVAILMQQFILQNWVK</sequence>